<dbReference type="EC" id="5.4.2.10" evidence="1"/>
<dbReference type="EMBL" id="BX897699">
    <property type="protein sequence ID" value="CAF28237.1"/>
    <property type="molecule type" value="Genomic_DNA"/>
</dbReference>
<dbReference type="RefSeq" id="WP_011181245.1">
    <property type="nucleotide sequence ID" value="NZ_LRIJ02000001.1"/>
</dbReference>
<dbReference type="SMR" id="Q6G5P7"/>
<dbReference type="PaxDb" id="283166-BH14740"/>
<dbReference type="EnsemblBacteria" id="CAF28237">
    <property type="protein sequence ID" value="CAF28237"/>
    <property type="gene ID" value="BH14740"/>
</dbReference>
<dbReference type="GeneID" id="92986089"/>
<dbReference type="KEGG" id="bhe:BH14740"/>
<dbReference type="eggNOG" id="COG1109">
    <property type="taxonomic scope" value="Bacteria"/>
</dbReference>
<dbReference type="OrthoDB" id="9803322at2"/>
<dbReference type="Proteomes" id="UP000000421">
    <property type="component" value="Chromosome"/>
</dbReference>
<dbReference type="GO" id="GO:0005829">
    <property type="term" value="C:cytosol"/>
    <property type="evidence" value="ECO:0007669"/>
    <property type="project" value="TreeGrafter"/>
</dbReference>
<dbReference type="GO" id="GO:0000287">
    <property type="term" value="F:magnesium ion binding"/>
    <property type="evidence" value="ECO:0007669"/>
    <property type="project" value="UniProtKB-UniRule"/>
</dbReference>
<dbReference type="GO" id="GO:0008966">
    <property type="term" value="F:phosphoglucosamine mutase activity"/>
    <property type="evidence" value="ECO:0007669"/>
    <property type="project" value="UniProtKB-UniRule"/>
</dbReference>
<dbReference type="GO" id="GO:0004615">
    <property type="term" value="F:phosphomannomutase activity"/>
    <property type="evidence" value="ECO:0007669"/>
    <property type="project" value="TreeGrafter"/>
</dbReference>
<dbReference type="GO" id="GO:0005975">
    <property type="term" value="P:carbohydrate metabolic process"/>
    <property type="evidence" value="ECO:0007669"/>
    <property type="project" value="InterPro"/>
</dbReference>
<dbReference type="GO" id="GO:0009252">
    <property type="term" value="P:peptidoglycan biosynthetic process"/>
    <property type="evidence" value="ECO:0007669"/>
    <property type="project" value="TreeGrafter"/>
</dbReference>
<dbReference type="GO" id="GO:0006048">
    <property type="term" value="P:UDP-N-acetylglucosamine biosynthetic process"/>
    <property type="evidence" value="ECO:0007669"/>
    <property type="project" value="TreeGrafter"/>
</dbReference>
<dbReference type="CDD" id="cd05802">
    <property type="entry name" value="GlmM"/>
    <property type="match status" value="1"/>
</dbReference>
<dbReference type="FunFam" id="3.40.120.10:FF:000001">
    <property type="entry name" value="Phosphoglucosamine mutase"/>
    <property type="match status" value="1"/>
</dbReference>
<dbReference type="FunFam" id="3.40.120.10:FF:000002">
    <property type="entry name" value="Phosphoglucosamine mutase"/>
    <property type="match status" value="1"/>
</dbReference>
<dbReference type="Gene3D" id="3.40.120.10">
    <property type="entry name" value="Alpha-D-Glucose-1,6-Bisphosphate, subunit A, domain 3"/>
    <property type="match status" value="3"/>
</dbReference>
<dbReference type="Gene3D" id="3.30.310.50">
    <property type="entry name" value="Alpha-D-phosphohexomutase, C-terminal domain"/>
    <property type="match status" value="1"/>
</dbReference>
<dbReference type="HAMAP" id="MF_01554_B">
    <property type="entry name" value="GlmM_B"/>
    <property type="match status" value="1"/>
</dbReference>
<dbReference type="InterPro" id="IPR005844">
    <property type="entry name" value="A-D-PHexomutase_a/b/a-I"/>
</dbReference>
<dbReference type="InterPro" id="IPR016055">
    <property type="entry name" value="A-D-PHexomutase_a/b/a-I/II/III"/>
</dbReference>
<dbReference type="InterPro" id="IPR005845">
    <property type="entry name" value="A-D-PHexomutase_a/b/a-II"/>
</dbReference>
<dbReference type="InterPro" id="IPR005846">
    <property type="entry name" value="A-D-PHexomutase_a/b/a-III"/>
</dbReference>
<dbReference type="InterPro" id="IPR005843">
    <property type="entry name" value="A-D-PHexomutase_C"/>
</dbReference>
<dbReference type="InterPro" id="IPR036900">
    <property type="entry name" value="A-D-PHexomutase_C_sf"/>
</dbReference>
<dbReference type="InterPro" id="IPR016066">
    <property type="entry name" value="A-D-PHexomutase_CS"/>
</dbReference>
<dbReference type="InterPro" id="IPR005841">
    <property type="entry name" value="Alpha-D-phosphohexomutase_SF"/>
</dbReference>
<dbReference type="InterPro" id="IPR006352">
    <property type="entry name" value="GlmM_bact"/>
</dbReference>
<dbReference type="InterPro" id="IPR050060">
    <property type="entry name" value="Phosphoglucosamine_mutase"/>
</dbReference>
<dbReference type="NCBIfam" id="TIGR01455">
    <property type="entry name" value="glmM"/>
    <property type="match status" value="1"/>
</dbReference>
<dbReference type="NCBIfam" id="NF008139">
    <property type="entry name" value="PRK10887.1"/>
    <property type="match status" value="1"/>
</dbReference>
<dbReference type="PANTHER" id="PTHR42946:SF1">
    <property type="entry name" value="PHOSPHOGLUCOMUTASE (ALPHA-D-GLUCOSE-1,6-BISPHOSPHATE-DEPENDENT)"/>
    <property type="match status" value="1"/>
</dbReference>
<dbReference type="PANTHER" id="PTHR42946">
    <property type="entry name" value="PHOSPHOHEXOSE MUTASE"/>
    <property type="match status" value="1"/>
</dbReference>
<dbReference type="Pfam" id="PF02878">
    <property type="entry name" value="PGM_PMM_I"/>
    <property type="match status" value="1"/>
</dbReference>
<dbReference type="Pfam" id="PF02879">
    <property type="entry name" value="PGM_PMM_II"/>
    <property type="match status" value="1"/>
</dbReference>
<dbReference type="Pfam" id="PF02880">
    <property type="entry name" value="PGM_PMM_III"/>
    <property type="match status" value="1"/>
</dbReference>
<dbReference type="Pfam" id="PF00408">
    <property type="entry name" value="PGM_PMM_IV"/>
    <property type="match status" value="1"/>
</dbReference>
<dbReference type="PRINTS" id="PR00509">
    <property type="entry name" value="PGMPMM"/>
</dbReference>
<dbReference type="SUPFAM" id="SSF55957">
    <property type="entry name" value="Phosphoglucomutase, C-terminal domain"/>
    <property type="match status" value="1"/>
</dbReference>
<dbReference type="SUPFAM" id="SSF53738">
    <property type="entry name" value="Phosphoglucomutase, first 3 domains"/>
    <property type="match status" value="3"/>
</dbReference>
<dbReference type="PROSITE" id="PS00710">
    <property type="entry name" value="PGM_PMM"/>
    <property type="match status" value="1"/>
</dbReference>
<accession>Q6G5P7</accession>
<reference key="1">
    <citation type="journal article" date="2004" name="Proc. Natl. Acad. Sci. U.S.A.">
        <title>The louse-borne human pathogen Bartonella quintana is a genomic derivative of the zoonotic agent Bartonella henselae.</title>
        <authorList>
            <person name="Alsmark U.C.M."/>
            <person name="Frank A.C."/>
            <person name="Karlberg E.O."/>
            <person name="Legault B.-A."/>
            <person name="Ardell D.H."/>
            <person name="Canbaeck B."/>
            <person name="Eriksson A.-S."/>
            <person name="Naeslund A.K."/>
            <person name="Handley S.A."/>
            <person name="Huvet M."/>
            <person name="La Scola B."/>
            <person name="Holmberg M."/>
            <person name="Andersson S.G.E."/>
        </authorList>
    </citation>
    <scope>NUCLEOTIDE SEQUENCE [LARGE SCALE GENOMIC DNA]</scope>
    <source>
        <strain>ATCC 49882 / DSM 28221 / CCUG 30454 / Houston 1</strain>
    </source>
</reference>
<feature type="chain" id="PRO_0000147848" description="Phosphoglucosamine mutase">
    <location>
        <begin position="1"/>
        <end position="459"/>
    </location>
</feature>
<feature type="active site" description="Phosphoserine intermediate" evidence="1">
    <location>
        <position position="102"/>
    </location>
</feature>
<feature type="binding site" description="via phosphate group" evidence="1">
    <location>
        <position position="102"/>
    </location>
    <ligand>
        <name>Mg(2+)</name>
        <dbReference type="ChEBI" id="CHEBI:18420"/>
    </ligand>
</feature>
<feature type="binding site" evidence="1">
    <location>
        <position position="243"/>
    </location>
    <ligand>
        <name>Mg(2+)</name>
        <dbReference type="ChEBI" id="CHEBI:18420"/>
    </ligand>
</feature>
<feature type="binding site" evidence="1">
    <location>
        <position position="245"/>
    </location>
    <ligand>
        <name>Mg(2+)</name>
        <dbReference type="ChEBI" id="CHEBI:18420"/>
    </ligand>
</feature>
<feature type="binding site" evidence="1">
    <location>
        <position position="247"/>
    </location>
    <ligand>
        <name>Mg(2+)</name>
        <dbReference type="ChEBI" id="CHEBI:18420"/>
    </ligand>
</feature>
<feature type="modified residue" description="Phosphoserine" evidence="1">
    <location>
        <position position="102"/>
    </location>
</feature>
<sequence length="459" mass="50233">MPQKYFGTDGIRGKANVFPMTPDFAMKVGMAVGILFRSQNQSRRVVIGKDTRLSGYMLENALVSGFTAAGMEAFLLGPVPTPAVAMLCRSLRADLGVMISASHNPFYDNGIKLFGPDGFKLSDEIEEKIEQLIDTDLSKSLASCAEIGYAKRVEGDIYRYIEYAKRTLPRDVRLDNLRIVVDCANGAAYKAAPRALWELGAEVFAINDTPNGTNINHKCGSTDLASLKQKVHEVRADVGIALDGDGDRVLLVDEKAQTVDGDQLIAVIAEHWHKNGRLQSKGVVTTIMSNLGLERFLNSKGLDLVRTKVGDRYVVDAMRKKGYNVGGEASGHIVLSDFGTTGDGLVAALQILACMQEIQIPMSHLCQRFEPVPQIFKNVMIKNKNVLKKNPVKTAIEQATQRLGKKARLVIRASGTEPVIRIMGEGDEREMLDAVVTEMVDIITHHDTLSKACASLERS</sequence>
<name>GLMM_BARHE</name>
<proteinExistence type="inferred from homology"/>
<gene>
    <name evidence="1" type="primary">glmM</name>
    <name type="ordered locus">BH14740</name>
</gene>
<evidence type="ECO:0000255" key="1">
    <source>
        <dbReference type="HAMAP-Rule" id="MF_01554"/>
    </source>
</evidence>
<organism>
    <name type="scientific">Bartonella henselae (strain ATCC 49882 / DSM 28221 / CCUG 30454 / Houston 1)</name>
    <name type="common">Rochalimaea henselae</name>
    <dbReference type="NCBI Taxonomy" id="283166"/>
    <lineage>
        <taxon>Bacteria</taxon>
        <taxon>Pseudomonadati</taxon>
        <taxon>Pseudomonadota</taxon>
        <taxon>Alphaproteobacteria</taxon>
        <taxon>Hyphomicrobiales</taxon>
        <taxon>Bartonellaceae</taxon>
        <taxon>Bartonella</taxon>
    </lineage>
</organism>
<keyword id="KW-0413">Isomerase</keyword>
<keyword id="KW-0460">Magnesium</keyword>
<keyword id="KW-0479">Metal-binding</keyword>
<keyword id="KW-0597">Phosphoprotein</keyword>
<comment type="function">
    <text evidence="1">Catalyzes the conversion of glucosamine-6-phosphate to glucosamine-1-phosphate.</text>
</comment>
<comment type="catalytic activity">
    <reaction evidence="1">
        <text>alpha-D-glucosamine 1-phosphate = D-glucosamine 6-phosphate</text>
        <dbReference type="Rhea" id="RHEA:23424"/>
        <dbReference type="ChEBI" id="CHEBI:58516"/>
        <dbReference type="ChEBI" id="CHEBI:58725"/>
        <dbReference type="EC" id="5.4.2.10"/>
    </reaction>
</comment>
<comment type="cofactor">
    <cofactor evidence="1">
        <name>Mg(2+)</name>
        <dbReference type="ChEBI" id="CHEBI:18420"/>
    </cofactor>
    <text evidence="1">Binds 1 Mg(2+) ion per subunit.</text>
</comment>
<comment type="PTM">
    <text evidence="1">Activated by phosphorylation.</text>
</comment>
<comment type="similarity">
    <text evidence="1">Belongs to the phosphohexose mutase family.</text>
</comment>
<protein>
    <recommendedName>
        <fullName evidence="1">Phosphoglucosamine mutase</fullName>
        <ecNumber evidence="1">5.4.2.10</ecNumber>
    </recommendedName>
</protein>